<keyword id="KW-0143">Chaperone</keyword>
<keyword id="KW-0963">Cytoplasm</keyword>
<keyword id="KW-0235">DNA replication</keyword>
<keyword id="KW-0479">Metal-binding</keyword>
<keyword id="KW-1185">Reference proteome</keyword>
<keyword id="KW-0677">Repeat</keyword>
<keyword id="KW-0346">Stress response</keyword>
<keyword id="KW-0862">Zinc</keyword>
<keyword id="KW-0863">Zinc-finger</keyword>
<comment type="function">
    <text evidence="1">Participates actively in the response to hyperosmotic and heat shock by preventing the aggregation of stress-denatured proteins and by disaggregating proteins, also in an autonomous, DnaK-independent fashion. Unfolded proteins bind initially to DnaJ; upon interaction with the DnaJ-bound protein, DnaK hydrolyzes its bound ATP, resulting in the formation of a stable complex. GrpE releases ADP from DnaK; ATP binding to DnaK triggers the release of the substrate protein, thus completing the reaction cycle. Several rounds of ATP-dependent interactions between DnaJ, DnaK and GrpE are required for fully efficient folding. Also involved, together with DnaK and GrpE, in the DNA replication of plasmids through activation of initiation proteins.</text>
</comment>
<comment type="cofactor">
    <cofactor evidence="1">
        <name>Zn(2+)</name>
        <dbReference type="ChEBI" id="CHEBI:29105"/>
    </cofactor>
    <text evidence="1">Binds 2 Zn(2+) ions per monomer.</text>
</comment>
<comment type="subunit">
    <text evidence="1">Homodimer.</text>
</comment>
<comment type="subcellular location">
    <subcellularLocation>
        <location evidence="1">Cytoplasm</location>
    </subcellularLocation>
</comment>
<comment type="domain">
    <text evidence="1">The J domain is necessary and sufficient to stimulate DnaK ATPase activity. Zinc center 1 plays an important role in the autonomous, DnaK-independent chaperone activity of DnaJ. Zinc center 2 is essential for interaction with DnaK and for DnaJ activity.</text>
</comment>
<comment type="similarity">
    <text evidence="1">Belongs to the DnaJ family.</text>
</comment>
<accession>Q8EHT6</accession>
<evidence type="ECO:0000255" key="1">
    <source>
        <dbReference type="HAMAP-Rule" id="MF_01152"/>
    </source>
</evidence>
<dbReference type="EMBL" id="AE014299">
    <property type="protein sequence ID" value="AAN54197.1"/>
    <property type="molecule type" value="Genomic_DNA"/>
</dbReference>
<dbReference type="RefSeq" id="NP_716752.1">
    <property type="nucleotide sequence ID" value="NC_004347.2"/>
</dbReference>
<dbReference type="RefSeq" id="WP_011071368.1">
    <property type="nucleotide sequence ID" value="NC_004347.2"/>
</dbReference>
<dbReference type="SMR" id="Q8EHT6"/>
<dbReference type="STRING" id="211586.SO_1127"/>
<dbReference type="PaxDb" id="211586-SO_1127"/>
<dbReference type="KEGG" id="son:SO_1127"/>
<dbReference type="PATRIC" id="fig|211586.12.peg.1080"/>
<dbReference type="eggNOG" id="COG0484">
    <property type="taxonomic scope" value="Bacteria"/>
</dbReference>
<dbReference type="HOGENOM" id="CLU_017633_0_7_6"/>
<dbReference type="OrthoDB" id="9779889at2"/>
<dbReference type="PhylomeDB" id="Q8EHT6"/>
<dbReference type="BioCyc" id="SONE211586:G1GMP-1037-MONOMER"/>
<dbReference type="Proteomes" id="UP000008186">
    <property type="component" value="Chromosome"/>
</dbReference>
<dbReference type="GO" id="GO:0005737">
    <property type="term" value="C:cytoplasm"/>
    <property type="evidence" value="ECO:0000318"/>
    <property type="project" value="GO_Central"/>
</dbReference>
<dbReference type="GO" id="GO:0005524">
    <property type="term" value="F:ATP binding"/>
    <property type="evidence" value="ECO:0007669"/>
    <property type="project" value="InterPro"/>
</dbReference>
<dbReference type="GO" id="GO:0031072">
    <property type="term" value="F:heat shock protein binding"/>
    <property type="evidence" value="ECO:0007669"/>
    <property type="project" value="InterPro"/>
</dbReference>
<dbReference type="GO" id="GO:0051082">
    <property type="term" value="F:unfolded protein binding"/>
    <property type="evidence" value="ECO:0000318"/>
    <property type="project" value="GO_Central"/>
</dbReference>
<dbReference type="GO" id="GO:0008270">
    <property type="term" value="F:zinc ion binding"/>
    <property type="evidence" value="ECO:0007669"/>
    <property type="project" value="UniProtKB-UniRule"/>
</dbReference>
<dbReference type="GO" id="GO:0051085">
    <property type="term" value="P:chaperone cofactor-dependent protein refolding"/>
    <property type="evidence" value="ECO:0000318"/>
    <property type="project" value="GO_Central"/>
</dbReference>
<dbReference type="GO" id="GO:0006260">
    <property type="term" value="P:DNA replication"/>
    <property type="evidence" value="ECO:0007669"/>
    <property type="project" value="UniProtKB-KW"/>
</dbReference>
<dbReference type="GO" id="GO:0042026">
    <property type="term" value="P:protein refolding"/>
    <property type="evidence" value="ECO:0000318"/>
    <property type="project" value="GO_Central"/>
</dbReference>
<dbReference type="GO" id="GO:0009408">
    <property type="term" value="P:response to heat"/>
    <property type="evidence" value="ECO:0007669"/>
    <property type="project" value="InterPro"/>
</dbReference>
<dbReference type="CDD" id="cd06257">
    <property type="entry name" value="DnaJ"/>
    <property type="match status" value="1"/>
</dbReference>
<dbReference type="CDD" id="cd10747">
    <property type="entry name" value="DnaJ_C"/>
    <property type="match status" value="1"/>
</dbReference>
<dbReference type="CDD" id="cd10719">
    <property type="entry name" value="DnaJ_zf"/>
    <property type="match status" value="1"/>
</dbReference>
<dbReference type="FunFam" id="1.10.287.110:FF:000003">
    <property type="entry name" value="Molecular chaperone DnaJ"/>
    <property type="match status" value="1"/>
</dbReference>
<dbReference type="FunFam" id="2.10.230.10:FF:000002">
    <property type="entry name" value="Molecular chaperone DnaJ"/>
    <property type="match status" value="1"/>
</dbReference>
<dbReference type="FunFam" id="2.60.260.20:FF:000004">
    <property type="entry name" value="Molecular chaperone DnaJ"/>
    <property type="match status" value="1"/>
</dbReference>
<dbReference type="Gene3D" id="1.10.287.110">
    <property type="entry name" value="DnaJ domain"/>
    <property type="match status" value="1"/>
</dbReference>
<dbReference type="Gene3D" id="2.10.230.10">
    <property type="entry name" value="Heat shock protein DnaJ, cysteine-rich domain"/>
    <property type="match status" value="1"/>
</dbReference>
<dbReference type="Gene3D" id="2.60.260.20">
    <property type="entry name" value="Urease metallochaperone UreE, N-terminal domain"/>
    <property type="match status" value="2"/>
</dbReference>
<dbReference type="HAMAP" id="MF_01152">
    <property type="entry name" value="DnaJ"/>
    <property type="match status" value="1"/>
</dbReference>
<dbReference type="InterPro" id="IPR012724">
    <property type="entry name" value="DnaJ"/>
</dbReference>
<dbReference type="InterPro" id="IPR002939">
    <property type="entry name" value="DnaJ_C"/>
</dbReference>
<dbReference type="InterPro" id="IPR001623">
    <property type="entry name" value="DnaJ_domain"/>
</dbReference>
<dbReference type="InterPro" id="IPR018253">
    <property type="entry name" value="DnaJ_domain_CS"/>
</dbReference>
<dbReference type="InterPro" id="IPR008971">
    <property type="entry name" value="HSP40/DnaJ_pept-bd"/>
</dbReference>
<dbReference type="InterPro" id="IPR001305">
    <property type="entry name" value="HSP_DnaJ_Cys-rich_dom"/>
</dbReference>
<dbReference type="InterPro" id="IPR036410">
    <property type="entry name" value="HSP_DnaJ_Cys-rich_dom_sf"/>
</dbReference>
<dbReference type="InterPro" id="IPR036869">
    <property type="entry name" value="J_dom_sf"/>
</dbReference>
<dbReference type="NCBIfam" id="TIGR02349">
    <property type="entry name" value="DnaJ_bact"/>
    <property type="match status" value="1"/>
</dbReference>
<dbReference type="NCBIfam" id="NF008035">
    <property type="entry name" value="PRK10767.1"/>
    <property type="match status" value="1"/>
</dbReference>
<dbReference type="PANTHER" id="PTHR43096:SF48">
    <property type="entry name" value="CHAPERONE PROTEIN DNAJ"/>
    <property type="match status" value="1"/>
</dbReference>
<dbReference type="PANTHER" id="PTHR43096">
    <property type="entry name" value="DNAJ HOMOLOG 1, MITOCHONDRIAL-RELATED"/>
    <property type="match status" value="1"/>
</dbReference>
<dbReference type="Pfam" id="PF00226">
    <property type="entry name" value="DnaJ"/>
    <property type="match status" value="1"/>
</dbReference>
<dbReference type="Pfam" id="PF01556">
    <property type="entry name" value="DnaJ_C"/>
    <property type="match status" value="1"/>
</dbReference>
<dbReference type="Pfam" id="PF00684">
    <property type="entry name" value="DnaJ_CXXCXGXG"/>
    <property type="match status" value="1"/>
</dbReference>
<dbReference type="PRINTS" id="PR00625">
    <property type="entry name" value="JDOMAIN"/>
</dbReference>
<dbReference type="SMART" id="SM00271">
    <property type="entry name" value="DnaJ"/>
    <property type="match status" value="1"/>
</dbReference>
<dbReference type="SUPFAM" id="SSF46565">
    <property type="entry name" value="Chaperone J-domain"/>
    <property type="match status" value="1"/>
</dbReference>
<dbReference type="SUPFAM" id="SSF57938">
    <property type="entry name" value="DnaJ/Hsp40 cysteine-rich domain"/>
    <property type="match status" value="1"/>
</dbReference>
<dbReference type="SUPFAM" id="SSF49493">
    <property type="entry name" value="HSP40/DnaJ peptide-binding domain"/>
    <property type="match status" value="2"/>
</dbReference>
<dbReference type="PROSITE" id="PS00636">
    <property type="entry name" value="DNAJ_1"/>
    <property type="match status" value="1"/>
</dbReference>
<dbReference type="PROSITE" id="PS50076">
    <property type="entry name" value="DNAJ_2"/>
    <property type="match status" value="1"/>
</dbReference>
<dbReference type="PROSITE" id="PS51188">
    <property type="entry name" value="ZF_CR"/>
    <property type="match status" value="1"/>
</dbReference>
<name>DNAJ_SHEON</name>
<organism>
    <name type="scientific">Shewanella oneidensis (strain ATCC 700550 / JCM 31522 / CIP 106686 / LMG 19005 / NCIMB 14063 / MR-1)</name>
    <dbReference type="NCBI Taxonomy" id="211586"/>
    <lineage>
        <taxon>Bacteria</taxon>
        <taxon>Pseudomonadati</taxon>
        <taxon>Pseudomonadota</taxon>
        <taxon>Gammaproteobacteria</taxon>
        <taxon>Alteromonadales</taxon>
        <taxon>Shewanellaceae</taxon>
        <taxon>Shewanella</taxon>
    </lineage>
</organism>
<gene>
    <name evidence="1" type="primary">dnaJ</name>
    <name type="ordered locus">SO_1127</name>
</gene>
<protein>
    <recommendedName>
        <fullName evidence="1">Chaperone protein DnaJ</fullName>
    </recommendedName>
</protein>
<feature type="chain" id="PRO_0000070879" description="Chaperone protein DnaJ">
    <location>
        <begin position="1"/>
        <end position="378"/>
    </location>
</feature>
<feature type="domain" description="J" evidence="1">
    <location>
        <begin position="5"/>
        <end position="70"/>
    </location>
</feature>
<feature type="repeat" description="CXXCXGXG motif">
    <location>
        <begin position="147"/>
        <end position="154"/>
    </location>
</feature>
<feature type="repeat" description="CXXCXGXG motif">
    <location>
        <begin position="164"/>
        <end position="171"/>
    </location>
</feature>
<feature type="repeat" description="CXXCXGXG motif">
    <location>
        <begin position="186"/>
        <end position="193"/>
    </location>
</feature>
<feature type="repeat" description="CXXCXGXG motif">
    <location>
        <begin position="200"/>
        <end position="207"/>
    </location>
</feature>
<feature type="zinc finger region" description="CR-type" evidence="1">
    <location>
        <begin position="134"/>
        <end position="212"/>
    </location>
</feature>
<feature type="binding site" evidence="1">
    <location>
        <position position="147"/>
    </location>
    <ligand>
        <name>Zn(2+)</name>
        <dbReference type="ChEBI" id="CHEBI:29105"/>
        <label>1</label>
    </ligand>
</feature>
<feature type="binding site" evidence="1">
    <location>
        <position position="150"/>
    </location>
    <ligand>
        <name>Zn(2+)</name>
        <dbReference type="ChEBI" id="CHEBI:29105"/>
        <label>1</label>
    </ligand>
</feature>
<feature type="binding site" evidence="1">
    <location>
        <position position="164"/>
    </location>
    <ligand>
        <name>Zn(2+)</name>
        <dbReference type="ChEBI" id="CHEBI:29105"/>
        <label>2</label>
    </ligand>
</feature>
<feature type="binding site" evidence="1">
    <location>
        <position position="167"/>
    </location>
    <ligand>
        <name>Zn(2+)</name>
        <dbReference type="ChEBI" id="CHEBI:29105"/>
        <label>2</label>
    </ligand>
</feature>
<feature type="binding site" evidence="1">
    <location>
        <position position="186"/>
    </location>
    <ligand>
        <name>Zn(2+)</name>
        <dbReference type="ChEBI" id="CHEBI:29105"/>
        <label>2</label>
    </ligand>
</feature>
<feature type="binding site" evidence="1">
    <location>
        <position position="189"/>
    </location>
    <ligand>
        <name>Zn(2+)</name>
        <dbReference type="ChEBI" id="CHEBI:29105"/>
        <label>2</label>
    </ligand>
</feature>
<feature type="binding site" evidence="1">
    <location>
        <position position="200"/>
    </location>
    <ligand>
        <name>Zn(2+)</name>
        <dbReference type="ChEBI" id="CHEBI:29105"/>
        <label>1</label>
    </ligand>
</feature>
<feature type="binding site" evidence="1">
    <location>
        <position position="203"/>
    </location>
    <ligand>
        <name>Zn(2+)</name>
        <dbReference type="ChEBI" id="CHEBI:29105"/>
        <label>1</label>
    </ligand>
</feature>
<sequence>MSKRDYYEVLGVGRDASEREIKKAYKRLAMKFHPDRNPGDKAAEASFKEVKEAYEILTDANKKAAYDQFGHAGVDPNRGGGGGYGGAGDFGDIFGDVFGDIFGGGRRGGGQRQAARGSDLRYNLELSLEEAVKGLTKELRIPTLASCDVCDGSGAKKGTSATTCTTCHGQGQVQMRQGFFTVQQPCPTCHGRGKIIKDPCAKCHGDGRVEKTKTLSVKIPAGVDTGDRIRLAGEGEAGEFGAPAGDLYVQVSVREHAIFVRDGNNLYCEVPISFSKAALGGEIEVPTLDGKVSLKIPAETQTGRMFRLRGKGVKSVRSHAVGDLLCKVVMETPVNLNERQKELLREFEATLTGESKKHSPKAEGFFDGVKKFFQDLNS</sequence>
<reference key="1">
    <citation type="journal article" date="2002" name="Nat. Biotechnol.">
        <title>Genome sequence of the dissimilatory metal ion-reducing bacterium Shewanella oneidensis.</title>
        <authorList>
            <person name="Heidelberg J.F."/>
            <person name="Paulsen I.T."/>
            <person name="Nelson K.E."/>
            <person name="Gaidos E.J."/>
            <person name="Nelson W.C."/>
            <person name="Read T.D."/>
            <person name="Eisen J.A."/>
            <person name="Seshadri R."/>
            <person name="Ward N.L."/>
            <person name="Methe B.A."/>
            <person name="Clayton R.A."/>
            <person name="Meyer T."/>
            <person name="Tsapin A."/>
            <person name="Scott J."/>
            <person name="Beanan M.J."/>
            <person name="Brinkac L.M."/>
            <person name="Daugherty S.C."/>
            <person name="DeBoy R.T."/>
            <person name="Dodson R.J."/>
            <person name="Durkin A.S."/>
            <person name="Haft D.H."/>
            <person name="Kolonay J.F."/>
            <person name="Madupu R."/>
            <person name="Peterson J.D."/>
            <person name="Umayam L.A."/>
            <person name="White O."/>
            <person name="Wolf A.M."/>
            <person name="Vamathevan J.J."/>
            <person name="Weidman J.F."/>
            <person name="Impraim M."/>
            <person name="Lee K."/>
            <person name="Berry K.J."/>
            <person name="Lee C."/>
            <person name="Mueller J."/>
            <person name="Khouri H.M."/>
            <person name="Gill J."/>
            <person name="Utterback T.R."/>
            <person name="McDonald L.A."/>
            <person name="Feldblyum T.V."/>
            <person name="Smith H.O."/>
            <person name="Venter J.C."/>
            <person name="Nealson K.H."/>
            <person name="Fraser C.M."/>
        </authorList>
    </citation>
    <scope>NUCLEOTIDE SEQUENCE [LARGE SCALE GENOMIC DNA]</scope>
    <source>
        <strain>ATCC 700550 / JCM 31522 / CIP 106686 / LMG 19005 / NCIMB 14063 / MR-1</strain>
    </source>
</reference>
<proteinExistence type="inferred from homology"/>